<accession>B3MRI9</accession>
<sequence length="1514" mass="169508">MDVLELLRASATGSYTALFSDAWCQYVSKQITNSMYLYCALGVLSMVFLAWFMYFKRLARIRLRDEASRSMSAVNSSSGGDLRGLRFRKRDKMLFYGRRMLRKMKNVSGQMYSSGKGYKRRAVMRFARRILQLRRDNMPLEMRTVEPPAEYLEETIDGSDRVPPDALYMLQSIRIFGHFEKPVFLRLCKHTQLLELMAGDYLFKITDPDDSVYIVQSGMINVYISNADGSTLSLKTVRKGESVTSLLSFIDVLSGNPSYYKTVTAKAIEKSVVIRLPMEAFEEVFQDNPDVMIRVIQVIMIRLQRVLFTALRNYLGLNAELVQNHMRFKSSTIMAPSTHSSQCSRQTGSQPTLGVPAPTCSNTTTTASPTTANTVHSGLAGANGVIGQSRPPISPSRHSREEHTLSDPNPNPDVINTSVGGASGTSMYAEVHGDAPNVDVFHQQQHSVGNLSTRRGSISQMAPDLGPALSQPGLGQGQGLGPGVTGAPPLMTGAPASKIDMRLVHASAVDSLRKELGLPEEDSHIIEPFVEVRELEPNVTLITEGNSDDVCVWFVMTGTLAVYQANQDAARAKQQQEKNDMLIHFVHPGEIVGGLAMLTGEASAYTIRSRNNSRVAFIRRAAIYQIMRQRPRIVLDLGNGVVRRLSPLVRQCDYALDWIFLESGRAVYRQDEISDSTYIVLSGRMRSVITHPGGKKEIIGEYGKGDLVGIVEMITETSRTTTVLAVRDSELAKLPEGLFNAIKLRYPIVVTKLISFLSHRFLGTMQTRSSSAAPGGPVEANPVTHKYSTVALVPITDEVPLTPFTYELYHSLCAIGPVLRLTSDVVRKQLGPNIFEAANEYRLTSWLAQQEDRNIITLYQCDNALSAWTQRCMRQADVILIVGLGNGSHLVGKFEREIDRLAMRTQKELVLLYPETTNSKPANTLSWLNARPWVTKHHHVLCVKRIFTRKSQYRINDLYSRVLLSEPNMHSDFSRLARWLTGNSIGLVLGGGGARGAAHIGMLKAIQEAGIPIDMVGGVSIGALMGALWCSERNITTVTQKAREWSKKMTKWFLQLLDLTYPITSMFSGREFNKTIHDTFGDVSIEDLWIPYFTLTTDITASCHRIHTNGSLWRYVRSSMSLSGYMPPLCDPKDGHLLLDGGYVNNLPGQLWRYCRASMSIAGVFPPFCDYRDGHLLLDGCYTNNVPADVMHNLGAAHIIAIDVGSQDDTDLTNYGDDLSGWWLLYKKWNPFTSPVKVPDLPDIQSRLAYVSCVRQLEEVKNSDYCEYIRPPIDKYKTLAFGSFDEIRDVGYVFGKNYFENMAKAGRLGRFNQWFNKEPPKRGNHASLNEYTFIDLAQIVCRLPETNAGNSADIFSEDEDCDGYISEPTTLNTDRRRIQVPRAGNSLSFSENEMDSDVELDLQLDRKTEKSIHSAATSVARGSMRSREFHKLEQDRSVEITRLKDETERIMAPTNLDRKGDGQEQEKEPEQEQELETEEPNQENTEVEEEQRNQGEGNEDNKENKGGAYNETKN</sequence>
<dbReference type="EC" id="3.1.1.5"/>
<dbReference type="EMBL" id="CH902622">
    <property type="protein sequence ID" value="EDV34394.1"/>
    <property type="molecule type" value="Genomic_DNA"/>
</dbReference>
<dbReference type="RefSeq" id="XP_001963945.1">
    <property type="nucleotide sequence ID" value="XM_001963909.2"/>
</dbReference>
<dbReference type="SMR" id="B3MRI9"/>
<dbReference type="FunCoup" id="B3MRI9">
    <property type="interactions" value="511"/>
</dbReference>
<dbReference type="STRING" id="7217.B3MRI9"/>
<dbReference type="EnsemblMetazoa" id="FBtr0125691">
    <property type="protein sequence ID" value="FBpp0124183"/>
    <property type="gene ID" value="FBgn0097996"/>
</dbReference>
<dbReference type="EnsemblMetazoa" id="XM_044716845.1">
    <property type="protein sequence ID" value="XP_044572780.1"/>
    <property type="gene ID" value="LOC6503680"/>
</dbReference>
<dbReference type="eggNOG" id="KOG2968">
    <property type="taxonomic scope" value="Eukaryota"/>
</dbReference>
<dbReference type="HOGENOM" id="CLU_000960_1_0_1"/>
<dbReference type="InParanoid" id="B3MRI9"/>
<dbReference type="OMA" id="GQQEDRH"/>
<dbReference type="OrthoDB" id="421051at2759"/>
<dbReference type="PhylomeDB" id="B3MRI9"/>
<dbReference type="Proteomes" id="UP000007801">
    <property type="component" value="Unassembled WGS sequence"/>
</dbReference>
<dbReference type="GO" id="GO:0005789">
    <property type="term" value="C:endoplasmic reticulum membrane"/>
    <property type="evidence" value="ECO:0000250"/>
    <property type="project" value="UniProtKB"/>
</dbReference>
<dbReference type="GO" id="GO:0005886">
    <property type="term" value="C:plasma membrane"/>
    <property type="evidence" value="ECO:0007669"/>
    <property type="project" value="EnsemblMetazoa"/>
</dbReference>
<dbReference type="GO" id="GO:0004622">
    <property type="term" value="F:lysophospholipase activity"/>
    <property type="evidence" value="ECO:0000250"/>
    <property type="project" value="UniProtKB"/>
</dbReference>
<dbReference type="GO" id="GO:0034236">
    <property type="term" value="F:protein kinase A catalytic subunit binding"/>
    <property type="evidence" value="ECO:0007669"/>
    <property type="project" value="EnsemblMetazoa"/>
</dbReference>
<dbReference type="GO" id="GO:0007272">
    <property type="term" value="P:ensheathment of neurons"/>
    <property type="evidence" value="ECO:0007669"/>
    <property type="project" value="EnsemblMetazoa"/>
</dbReference>
<dbReference type="GO" id="GO:0034349">
    <property type="term" value="P:glial cell apoptotic process"/>
    <property type="evidence" value="ECO:0000250"/>
    <property type="project" value="UniProtKB"/>
</dbReference>
<dbReference type="GO" id="GO:0016042">
    <property type="term" value="P:lipid catabolic process"/>
    <property type="evidence" value="ECO:0007669"/>
    <property type="project" value="UniProtKB-KW"/>
</dbReference>
<dbReference type="GO" id="GO:0006643">
    <property type="term" value="P:membrane lipid metabolic process"/>
    <property type="evidence" value="ECO:0000250"/>
    <property type="project" value="UniProtKB"/>
</dbReference>
<dbReference type="GO" id="GO:0061024">
    <property type="term" value="P:membrane organization"/>
    <property type="evidence" value="ECO:0000250"/>
    <property type="project" value="UniProtKB"/>
</dbReference>
<dbReference type="GO" id="GO:0051402">
    <property type="term" value="P:neuron apoptotic process"/>
    <property type="evidence" value="ECO:0000250"/>
    <property type="project" value="UniProtKB"/>
</dbReference>
<dbReference type="GO" id="GO:0046470">
    <property type="term" value="P:phosphatidylcholine metabolic process"/>
    <property type="evidence" value="ECO:0000250"/>
    <property type="project" value="UniProtKB"/>
</dbReference>
<dbReference type="GO" id="GO:0045494">
    <property type="term" value="P:photoreceptor cell maintenance"/>
    <property type="evidence" value="ECO:0007669"/>
    <property type="project" value="EnsemblMetazoa"/>
</dbReference>
<dbReference type="GO" id="GO:0072657">
    <property type="term" value="P:protein localization to membrane"/>
    <property type="evidence" value="ECO:0007669"/>
    <property type="project" value="EnsemblMetazoa"/>
</dbReference>
<dbReference type="GO" id="GO:0007608">
    <property type="term" value="P:sensory perception of smell"/>
    <property type="evidence" value="ECO:0007669"/>
    <property type="project" value="EnsemblMetazoa"/>
</dbReference>
<dbReference type="CDD" id="cd00038">
    <property type="entry name" value="CAP_ED"/>
    <property type="match status" value="3"/>
</dbReference>
<dbReference type="CDD" id="cd07225">
    <property type="entry name" value="Pat_PNPLA6_PNPLA7"/>
    <property type="match status" value="1"/>
</dbReference>
<dbReference type="FunFam" id="2.60.120.10:FF:000010">
    <property type="entry name" value="neuropathy target esterase isoform X1"/>
    <property type="match status" value="1"/>
</dbReference>
<dbReference type="FunFam" id="2.60.120.10:FF:000122">
    <property type="entry name" value="Neuropathy target esterase sws"/>
    <property type="match status" value="1"/>
</dbReference>
<dbReference type="FunFam" id="2.60.120.10:FF:000135">
    <property type="entry name" value="Neuropathy target esterase sws"/>
    <property type="match status" value="1"/>
</dbReference>
<dbReference type="FunFam" id="3.40.1090.10:FF:000022">
    <property type="entry name" value="Neuropathy target esterase sws"/>
    <property type="match status" value="1"/>
</dbReference>
<dbReference type="FunFam" id="3.40.1090.10:FF:000033">
    <property type="entry name" value="Neuropathy target esterase sws"/>
    <property type="match status" value="1"/>
</dbReference>
<dbReference type="Gene3D" id="3.40.1090.10">
    <property type="entry name" value="Cytosolic phospholipase A2 catalytic domain"/>
    <property type="match status" value="2"/>
</dbReference>
<dbReference type="Gene3D" id="2.60.120.10">
    <property type="entry name" value="Jelly Rolls"/>
    <property type="match status" value="3"/>
</dbReference>
<dbReference type="InterPro" id="IPR016035">
    <property type="entry name" value="Acyl_Trfase/lysoPLipase"/>
</dbReference>
<dbReference type="InterPro" id="IPR000595">
    <property type="entry name" value="cNMP-bd_dom"/>
</dbReference>
<dbReference type="InterPro" id="IPR018490">
    <property type="entry name" value="cNMP-bd_dom_sf"/>
</dbReference>
<dbReference type="InterPro" id="IPR001423">
    <property type="entry name" value="LysoPLipase_patatin_CS"/>
</dbReference>
<dbReference type="InterPro" id="IPR050301">
    <property type="entry name" value="NTE"/>
</dbReference>
<dbReference type="InterPro" id="IPR056556">
    <property type="entry name" value="NTE1_P-loop_dom"/>
</dbReference>
<dbReference type="InterPro" id="IPR002641">
    <property type="entry name" value="PNPLA_dom"/>
</dbReference>
<dbReference type="InterPro" id="IPR014710">
    <property type="entry name" value="RmlC-like_jellyroll"/>
</dbReference>
<dbReference type="PANTHER" id="PTHR14226:SF29">
    <property type="entry name" value="NEUROPATHY TARGET ESTERASE SWS"/>
    <property type="match status" value="1"/>
</dbReference>
<dbReference type="PANTHER" id="PTHR14226">
    <property type="entry name" value="NEUROPATHY TARGET ESTERASE/SWISS CHEESE D.MELANOGASTER"/>
    <property type="match status" value="1"/>
</dbReference>
<dbReference type="Pfam" id="PF00027">
    <property type="entry name" value="cNMP_binding"/>
    <property type="match status" value="3"/>
</dbReference>
<dbReference type="Pfam" id="PF24179">
    <property type="entry name" value="NTE_Ploop"/>
    <property type="match status" value="1"/>
</dbReference>
<dbReference type="Pfam" id="PF01734">
    <property type="entry name" value="Patatin"/>
    <property type="match status" value="1"/>
</dbReference>
<dbReference type="SMART" id="SM00100">
    <property type="entry name" value="cNMP"/>
    <property type="match status" value="3"/>
</dbReference>
<dbReference type="SUPFAM" id="SSF51206">
    <property type="entry name" value="cAMP-binding domain-like"/>
    <property type="match status" value="3"/>
</dbReference>
<dbReference type="SUPFAM" id="SSF52151">
    <property type="entry name" value="FabD/lysophospholipase-like"/>
    <property type="match status" value="2"/>
</dbReference>
<dbReference type="PROSITE" id="PS50042">
    <property type="entry name" value="CNMP_BINDING_3"/>
    <property type="match status" value="3"/>
</dbReference>
<dbReference type="PROSITE" id="PS51635">
    <property type="entry name" value="PNPLA"/>
    <property type="match status" value="1"/>
</dbReference>
<dbReference type="PROSITE" id="PS01237">
    <property type="entry name" value="UPF0028"/>
    <property type="match status" value="1"/>
</dbReference>
<organism>
    <name type="scientific">Drosophila ananassae</name>
    <name type="common">Fruit fly</name>
    <dbReference type="NCBI Taxonomy" id="7217"/>
    <lineage>
        <taxon>Eukaryota</taxon>
        <taxon>Metazoa</taxon>
        <taxon>Ecdysozoa</taxon>
        <taxon>Arthropoda</taxon>
        <taxon>Hexapoda</taxon>
        <taxon>Insecta</taxon>
        <taxon>Pterygota</taxon>
        <taxon>Neoptera</taxon>
        <taxon>Endopterygota</taxon>
        <taxon>Diptera</taxon>
        <taxon>Brachycera</taxon>
        <taxon>Muscomorpha</taxon>
        <taxon>Ephydroidea</taxon>
        <taxon>Drosophilidae</taxon>
        <taxon>Drosophila</taxon>
        <taxon>Sophophora</taxon>
    </lineage>
</organism>
<feature type="chain" id="PRO_0000389220" description="Neuropathy target esterase sws">
    <location>
        <begin position="1"/>
        <end position="1514"/>
    </location>
</feature>
<feature type="topological domain" description="Lumenal" evidence="3">
    <location>
        <begin position="1"/>
        <end position="34"/>
    </location>
</feature>
<feature type="transmembrane region" description="Helical" evidence="3">
    <location>
        <begin position="35"/>
        <end position="55"/>
    </location>
</feature>
<feature type="topological domain" description="Cytoplasmic" evidence="3">
    <location>
        <begin position="56"/>
        <end position="1514"/>
    </location>
</feature>
<feature type="domain" description="PNPLA" evidence="4">
    <location>
        <begin position="987"/>
        <end position="1153"/>
    </location>
</feature>
<feature type="region of interest" description="Disordered" evidence="5">
    <location>
        <begin position="337"/>
        <end position="418"/>
    </location>
</feature>
<feature type="region of interest" description="Disordered" evidence="5">
    <location>
        <begin position="1409"/>
        <end position="1514"/>
    </location>
</feature>
<feature type="short sequence motif" description="GXGXXG" evidence="4">
    <location>
        <begin position="991"/>
        <end position="996"/>
    </location>
</feature>
<feature type="short sequence motif" description="GXSXG" evidence="4">
    <location>
        <begin position="1018"/>
        <end position="1022"/>
    </location>
</feature>
<feature type="short sequence motif" description="DGA/G" evidence="4">
    <location>
        <begin position="1140"/>
        <end position="1142"/>
    </location>
</feature>
<feature type="compositionally biased region" description="Polar residues" evidence="5">
    <location>
        <begin position="337"/>
        <end position="352"/>
    </location>
</feature>
<feature type="compositionally biased region" description="Low complexity" evidence="5">
    <location>
        <begin position="356"/>
        <end position="374"/>
    </location>
</feature>
<feature type="compositionally biased region" description="Basic and acidic residues" evidence="5">
    <location>
        <begin position="1425"/>
        <end position="1449"/>
    </location>
</feature>
<feature type="compositionally biased region" description="Basic and acidic residues" evidence="5">
    <location>
        <begin position="1456"/>
        <end position="1470"/>
    </location>
</feature>
<feature type="compositionally biased region" description="Acidic residues" evidence="5">
    <location>
        <begin position="1471"/>
        <end position="1489"/>
    </location>
</feature>
<feature type="active site" description="Nucleophile" evidence="4">
    <location>
        <position position="1020"/>
    </location>
</feature>
<feature type="active site" description="Proton acceptor" evidence="4">
    <location>
        <position position="1140"/>
    </location>
</feature>
<feature type="binding site" evidence="3">
    <location>
        <begin position="175"/>
        <end position="302"/>
    </location>
    <ligand>
        <name>a nucleoside 3',5'-cyclic phosphate</name>
        <dbReference type="ChEBI" id="CHEBI:58464"/>
        <label>1</label>
    </ligand>
</feature>
<feature type="binding site" evidence="3">
    <location>
        <begin position="515"/>
        <end position="644"/>
    </location>
    <ligand>
        <name>a nucleoside 3',5'-cyclic phosphate</name>
        <dbReference type="ChEBI" id="CHEBI:58464"/>
        <label>2</label>
    </ligand>
</feature>
<feature type="binding site" evidence="3">
    <location>
        <begin position="633"/>
        <end position="760"/>
    </location>
    <ligand>
        <name>a nucleoside 3',5'-cyclic phosphate</name>
        <dbReference type="ChEBI" id="CHEBI:58464"/>
        <label>3</label>
    </ligand>
</feature>
<feature type="modified residue" description="Phosphoserine" evidence="2">
    <location>
        <position position="457"/>
    </location>
</feature>
<feature type="modified residue" description="Phosphoserine" evidence="2">
    <location>
        <position position="1234"/>
    </location>
</feature>
<protein>
    <recommendedName>
        <fullName evidence="2">Neuropathy target esterase sws</fullName>
    </recommendedName>
    <alternativeName>
        <fullName evidence="2">Swiss cheese</fullName>
        <ecNumber>3.1.1.5</ecNumber>
    </alternativeName>
</protein>
<gene>
    <name evidence="2" type="primary">sws</name>
    <name type="ORF">GF20991</name>
</gene>
<comment type="function">
    <text evidence="2">Phospholipase B that deacylates intracellular phosphatidylcholine (PtdCho), generating glycerophosphocholine (GroPtdCho). This deacylation occurs at both sn-2 and sn-1 positions of PtdCho. Its specific chemical modification by certain organophosphorus (OP) compounds leads to distal axonopathy. Plays a role in the signaling mechanism between neurons and glia that regulates glia wrapping during development of the adult brain. Essential for membrane lipid homeostasis and cell survival in both neurons and glia of the adult brain (By similarity).</text>
</comment>
<comment type="catalytic activity">
    <reaction evidence="2">
        <text>a 1-acyl-sn-glycero-3-phosphocholine + H2O = sn-glycerol 3-phosphocholine + a fatty acid + H(+)</text>
        <dbReference type="Rhea" id="RHEA:15177"/>
        <dbReference type="ChEBI" id="CHEBI:15377"/>
        <dbReference type="ChEBI" id="CHEBI:15378"/>
        <dbReference type="ChEBI" id="CHEBI:16870"/>
        <dbReference type="ChEBI" id="CHEBI:28868"/>
        <dbReference type="ChEBI" id="CHEBI:58168"/>
        <dbReference type="EC" id="3.1.1.5"/>
    </reaction>
</comment>
<comment type="subunit">
    <text evidence="1">Interacts with Pka-C3; interaction inhibits the catalytic function of Pka-C3 and the esterase activity of sws.</text>
</comment>
<comment type="subcellular location">
    <subcellularLocation>
        <location evidence="2">Endoplasmic reticulum membrane</location>
        <topology evidence="2">Single-pass type I membrane protein</topology>
    </subcellularLocation>
    <text evidence="2">Sws tethers Pka-C3 to the membrane.</text>
</comment>
<comment type="similarity">
    <text evidence="3">Belongs to the NTE family.</text>
</comment>
<proteinExistence type="inferred from homology"/>
<evidence type="ECO:0000250" key="1"/>
<evidence type="ECO:0000250" key="2">
    <source>
        <dbReference type="UniProtKB" id="Q9U969"/>
    </source>
</evidence>
<evidence type="ECO:0000255" key="3"/>
<evidence type="ECO:0000255" key="4">
    <source>
        <dbReference type="PROSITE-ProRule" id="PRU01161"/>
    </source>
</evidence>
<evidence type="ECO:0000256" key="5">
    <source>
        <dbReference type="SAM" id="MobiDB-lite"/>
    </source>
</evidence>
<evidence type="ECO:0000312" key="6">
    <source>
        <dbReference type="EMBL" id="EDV34394.1"/>
    </source>
</evidence>
<keyword id="KW-0217">Developmental protein</keyword>
<keyword id="KW-0256">Endoplasmic reticulum</keyword>
<keyword id="KW-0378">Hydrolase</keyword>
<keyword id="KW-0442">Lipid degradation</keyword>
<keyword id="KW-0443">Lipid metabolism</keyword>
<keyword id="KW-0472">Membrane</keyword>
<keyword id="KW-0524">Neurogenesis</keyword>
<keyword id="KW-0597">Phosphoprotein</keyword>
<keyword id="KW-1185">Reference proteome</keyword>
<keyword id="KW-0812">Transmembrane</keyword>
<keyword id="KW-1133">Transmembrane helix</keyword>
<name>SWS_DROAN</name>
<reference evidence="6" key="1">
    <citation type="journal article" date="2007" name="Nature">
        <title>Evolution of genes and genomes on the Drosophila phylogeny.</title>
        <authorList>
            <consortium name="Drosophila 12 genomes consortium"/>
        </authorList>
    </citation>
    <scope>NUCLEOTIDE SEQUENCE [LARGE SCALE GENOMIC DNA]</scope>
    <source>
        <strain evidence="6">Tucson 14024-0371.13</strain>
    </source>
</reference>